<evidence type="ECO:0000250" key="1"/>
<evidence type="ECO:0000305" key="2"/>
<proteinExistence type="evidence at transcript level"/>
<accession>P48579</accession>
<comment type="catalytic activity">
    <reaction>
        <text>O-phospho-L-seryl-[protein] + H2O = L-seryl-[protein] + phosphate</text>
        <dbReference type="Rhea" id="RHEA:20629"/>
        <dbReference type="Rhea" id="RHEA-COMP:9863"/>
        <dbReference type="Rhea" id="RHEA-COMP:11604"/>
        <dbReference type="ChEBI" id="CHEBI:15377"/>
        <dbReference type="ChEBI" id="CHEBI:29999"/>
        <dbReference type="ChEBI" id="CHEBI:43474"/>
        <dbReference type="ChEBI" id="CHEBI:83421"/>
        <dbReference type="EC" id="3.1.3.16"/>
    </reaction>
</comment>
<comment type="catalytic activity">
    <reaction>
        <text>O-phospho-L-threonyl-[protein] + H2O = L-threonyl-[protein] + phosphate</text>
        <dbReference type="Rhea" id="RHEA:47004"/>
        <dbReference type="Rhea" id="RHEA-COMP:11060"/>
        <dbReference type="Rhea" id="RHEA-COMP:11605"/>
        <dbReference type="ChEBI" id="CHEBI:15377"/>
        <dbReference type="ChEBI" id="CHEBI:30013"/>
        <dbReference type="ChEBI" id="CHEBI:43474"/>
        <dbReference type="ChEBI" id="CHEBI:61977"/>
        <dbReference type="EC" id="3.1.3.16"/>
    </reaction>
</comment>
<comment type="cofactor">
    <cofactor evidence="1">
        <name>Mn(2+)</name>
        <dbReference type="ChEBI" id="CHEBI:29035"/>
    </cofactor>
    <text evidence="1">Binds 2 manganese ions per subunit.</text>
</comment>
<comment type="similarity">
    <text evidence="2">Belongs to the PPP phosphatase family. PP-2A subfamily.</text>
</comment>
<feature type="chain" id="PRO_0000058858" description="Serine/threonine-protein phosphatase PP2A catalytic subunit">
    <location>
        <begin position="1"/>
        <end position="305"/>
    </location>
</feature>
<feature type="active site" description="Proton donor" evidence="1">
    <location>
        <position position="114"/>
    </location>
</feature>
<feature type="binding site" evidence="1">
    <location>
        <position position="53"/>
    </location>
    <ligand>
        <name>Mn(2+)</name>
        <dbReference type="ChEBI" id="CHEBI:29035"/>
        <label>1</label>
    </ligand>
</feature>
<feature type="binding site" evidence="1">
    <location>
        <position position="55"/>
    </location>
    <ligand>
        <name>Mn(2+)</name>
        <dbReference type="ChEBI" id="CHEBI:29035"/>
        <label>1</label>
    </ligand>
</feature>
<feature type="binding site" evidence="1">
    <location>
        <position position="81"/>
    </location>
    <ligand>
        <name>Mn(2+)</name>
        <dbReference type="ChEBI" id="CHEBI:29035"/>
        <label>1</label>
    </ligand>
</feature>
<feature type="binding site" evidence="1">
    <location>
        <position position="81"/>
    </location>
    <ligand>
        <name>Mn(2+)</name>
        <dbReference type="ChEBI" id="CHEBI:29035"/>
        <label>2</label>
    </ligand>
</feature>
<feature type="binding site" evidence="1">
    <location>
        <position position="113"/>
    </location>
    <ligand>
        <name>Mn(2+)</name>
        <dbReference type="ChEBI" id="CHEBI:29035"/>
        <label>2</label>
    </ligand>
</feature>
<feature type="binding site" evidence="1">
    <location>
        <position position="163"/>
    </location>
    <ligand>
        <name>Mn(2+)</name>
        <dbReference type="ChEBI" id="CHEBI:29035"/>
        <label>2</label>
    </ligand>
</feature>
<feature type="binding site" evidence="1">
    <location>
        <position position="237"/>
    </location>
    <ligand>
        <name>Mn(2+)</name>
        <dbReference type="ChEBI" id="CHEBI:29035"/>
        <label>2</label>
    </ligand>
</feature>
<sequence length="305" mass="34865">MPSQSDLDRQIEHLMDCKPLPEEVRTLCDQARTILVEEWNVQPVKCPVTVCGDIHGQFHDLLELFRIGGSAPDTNYLFMGDYVDRGYYSVETVTLLVALKVRYRDRITILRGNHESRQITQVYGFFDECLRKYGNANVWKHFTDLFDYLPLTALIESQIFCLHGGLSPSLDTLDNIRALDRIQEVPHEGPMCDLLWSDPDDRCGWGISPRGAGYTFGQDIAAQFNHTNGLSLISRAHQLVMEGYNWSQENNVVTIFSAPNYCYRCGNMAAILEVGENMDQNFLQFDPAPRQVEPDVARRTPDYFL</sequence>
<reference key="1">
    <citation type="journal article" date="1995" name="Eur. J. Cell Biol.">
        <title>Protein phosphatase 2A, a potential regulator of actin dynamics and actin-based organelle motility in the green alga Acetabularia.</title>
        <authorList>
            <person name="Menzel D."/>
            <person name="Vugrek O."/>
            <person name="Frank S."/>
            <person name="Elsner-Menzel C."/>
        </authorList>
    </citation>
    <scope>NUCLEOTIDE SEQUENCE [MRNA]</scope>
    <source>
        <tissue>Root meristem</tissue>
    </source>
</reference>
<dbReference type="EC" id="3.1.3.16"/>
<dbReference type="EMBL" id="Z26041">
    <property type="protein sequence ID" value="CAA81126.1"/>
    <property type="molecule type" value="mRNA"/>
</dbReference>
<dbReference type="PIR" id="S37086">
    <property type="entry name" value="S37086"/>
</dbReference>
<dbReference type="SMR" id="P48579"/>
<dbReference type="GO" id="GO:0046872">
    <property type="term" value="F:metal ion binding"/>
    <property type="evidence" value="ECO:0007669"/>
    <property type="project" value="UniProtKB-KW"/>
</dbReference>
<dbReference type="GO" id="GO:0004722">
    <property type="term" value="F:protein serine/threonine phosphatase activity"/>
    <property type="evidence" value="ECO:0007669"/>
    <property type="project" value="UniProtKB-EC"/>
</dbReference>
<dbReference type="CDD" id="cd07415">
    <property type="entry name" value="MPP_PP2A_PP4_PP6"/>
    <property type="match status" value="1"/>
</dbReference>
<dbReference type="FunFam" id="3.60.21.10:FF:000003">
    <property type="entry name" value="Serine/threonine-protein phosphatase"/>
    <property type="match status" value="1"/>
</dbReference>
<dbReference type="Gene3D" id="3.60.21.10">
    <property type="match status" value="1"/>
</dbReference>
<dbReference type="InterPro" id="IPR004843">
    <property type="entry name" value="Calcineurin-like_PHP_ApaH"/>
</dbReference>
<dbReference type="InterPro" id="IPR029052">
    <property type="entry name" value="Metallo-depent_PP-like"/>
</dbReference>
<dbReference type="InterPro" id="IPR047129">
    <property type="entry name" value="PPA2-like"/>
</dbReference>
<dbReference type="InterPro" id="IPR006186">
    <property type="entry name" value="Ser/Thr-sp_prot-phosphatase"/>
</dbReference>
<dbReference type="PANTHER" id="PTHR45619">
    <property type="entry name" value="SERINE/THREONINE-PROTEIN PHOSPHATASE PP2A-RELATED"/>
    <property type="match status" value="1"/>
</dbReference>
<dbReference type="Pfam" id="PF00149">
    <property type="entry name" value="Metallophos"/>
    <property type="match status" value="1"/>
</dbReference>
<dbReference type="PRINTS" id="PR00114">
    <property type="entry name" value="STPHPHTASE"/>
</dbReference>
<dbReference type="SMART" id="SM00156">
    <property type="entry name" value="PP2Ac"/>
    <property type="match status" value="1"/>
</dbReference>
<dbReference type="SUPFAM" id="SSF56300">
    <property type="entry name" value="Metallo-dependent phosphatases"/>
    <property type="match status" value="1"/>
</dbReference>
<dbReference type="PROSITE" id="PS00125">
    <property type="entry name" value="SER_THR_PHOSPHATASE"/>
    <property type="match status" value="1"/>
</dbReference>
<protein>
    <recommendedName>
        <fullName>Serine/threonine-protein phosphatase PP2A catalytic subunit</fullName>
        <ecNumber>3.1.3.16</ecNumber>
    </recommendedName>
</protein>
<name>PP2A_HELAN</name>
<organism>
    <name type="scientific">Helianthus annuus</name>
    <name type="common">Common sunflower</name>
    <dbReference type="NCBI Taxonomy" id="4232"/>
    <lineage>
        <taxon>Eukaryota</taxon>
        <taxon>Viridiplantae</taxon>
        <taxon>Streptophyta</taxon>
        <taxon>Embryophyta</taxon>
        <taxon>Tracheophyta</taxon>
        <taxon>Spermatophyta</taxon>
        <taxon>Magnoliopsida</taxon>
        <taxon>eudicotyledons</taxon>
        <taxon>Gunneridae</taxon>
        <taxon>Pentapetalae</taxon>
        <taxon>asterids</taxon>
        <taxon>campanulids</taxon>
        <taxon>Asterales</taxon>
        <taxon>Asteraceae</taxon>
        <taxon>Asteroideae</taxon>
        <taxon>Heliantheae alliance</taxon>
        <taxon>Heliantheae</taxon>
        <taxon>Helianthus</taxon>
    </lineage>
</organism>
<keyword id="KW-0378">Hydrolase</keyword>
<keyword id="KW-0464">Manganese</keyword>
<keyword id="KW-0479">Metal-binding</keyword>
<keyword id="KW-0904">Protein phosphatase</keyword>